<gene>
    <name evidence="1" type="primary">argH</name>
    <name type="ordered locus">Pcar_2418</name>
</gene>
<keyword id="KW-0028">Amino-acid biosynthesis</keyword>
<keyword id="KW-0055">Arginine biosynthesis</keyword>
<keyword id="KW-0963">Cytoplasm</keyword>
<keyword id="KW-0456">Lyase</keyword>
<keyword id="KW-1185">Reference proteome</keyword>
<proteinExistence type="inferred from homology"/>
<protein>
    <recommendedName>
        <fullName evidence="1">Argininosuccinate lyase</fullName>
        <shortName evidence="1">ASAL</shortName>
        <ecNumber evidence="1">4.3.2.1</ecNumber>
    </recommendedName>
    <alternativeName>
        <fullName evidence="1">Arginosuccinase</fullName>
    </alternativeName>
</protein>
<evidence type="ECO:0000255" key="1">
    <source>
        <dbReference type="HAMAP-Rule" id="MF_00006"/>
    </source>
</evidence>
<accession>Q3A1V0</accession>
<feature type="chain" id="PRO_0000240747" description="Argininosuccinate lyase">
    <location>
        <begin position="1"/>
        <end position="461"/>
    </location>
</feature>
<comment type="catalytic activity">
    <reaction evidence="1">
        <text>2-(N(omega)-L-arginino)succinate = fumarate + L-arginine</text>
        <dbReference type="Rhea" id="RHEA:24020"/>
        <dbReference type="ChEBI" id="CHEBI:29806"/>
        <dbReference type="ChEBI" id="CHEBI:32682"/>
        <dbReference type="ChEBI" id="CHEBI:57472"/>
        <dbReference type="EC" id="4.3.2.1"/>
    </reaction>
</comment>
<comment type="pathway">
    <text evidence="1">Amino-acid biosynthesis; L-arginine biosynthesis; L-arginine from L-ornithine and carbamoyl phosphate: step 3/3.</text>
</comment>
<comment type="subcellular location">
    <subcellularLocation>
        <location evidence="1">Cytoplasm</location>
    </subcellularLocation>
</comment>
<comment type="similarity">
    <text evidence="1">Belongs to the lyase 1 family. Argininosuccinate lyase subfamily.</text>
</comment>
<organism>
    <name type="scientific">Syntrophotalea carbinolica (strain DSM 2380 / NBRC 103641 / GraBd1)</name>
    <name type="common">Pelobacter carbinolicus</name>
    <dbReference type="NCBI Taxonomy" id="338963"/>
    <lineage>
        <taxon>Bacteria</taxon>
        <taxon>Pseudomonadati</taxon>
        <taxon>Thermodesulfobacteriota</taxon>
        <taxon>Desulfuromonadia</taxon>
        <taxon>Desulfuromonadales</taxon>
        <taxon>Syntrophotaleaceae</taxon>
        <taxon>Syntrophotalea</taxon>
    </lineage>
</organism>
<sequence length="461" mass="52131">MSKKPWAGRFTQPTDAFVEAFTASIDFDQRLYRYDIQGSMAHARMLSRQGIITGAEAQTIISGLESILADIEKGDFEFSVALEDIHMNIEARLIERIGSVGGKLHTARSRNDQVALDIRLYLRDEVKEVRSFLEKVQESLLEQAERNLGVIMPGYTHLQTAQPILFSHHMMAYYEMFRRDSWRMADIYKRINLLPLGAGALAGTTFPIDREYVAEQLGFDGVTRNSLDSVSDRDFALEFCSAASVVMMHLSRLSEELILWSSADFHFIDLSDAFCTGSSIMPQKKNPDVPELVRGKTGRVYGNLMSLLTVMKALPLAYNKDMQEDKEPLFDTIDTVKGSLKIFADMIAQMSIRADNMREAAARGFSTATDVADYVVRKGIPFRDAHEIVGKTVRYCIEHDKQIEELTLEEFKAFSEHIDSDIYDFITLEASVDSRRATGGTAREAVAREIGRARQERLQRM</sequence>
<reference key="1">
    <citation type="submission" date="2005-10" db="EMBL/GenBank/DDBJ databases">
        <title>Complete sequence of Pelobacter carbinolicus DSM 2380.</title>
        <authorList>
            <person name="Copeland A."/>
            <person name="Lucas S."/>
            <person name="Lapidus A."/>
            <person name="Barry K."/>
            <person name="Detter J.C."/>
            <person name="Glavina T."/>
            <person name="Hammon N."/>
            <person name="Israni S."/>
            <person name="Pitluck S."/>
            <person name="Chertkov O."/>
            <person name="Schmutz J."/>
            <person name="Larimer F."/>
            <person name="Land M."/>
            <person name="Kyrpides N."/>
            <person name="Ivanova N."/>
            <person name="Richardson P."/>
        </authorList>
    </citation>
    <scope>NUCLEOTIDE SEQUENCE [LARGE SCALE GENOMIC DNA]</scope>
    <source>
        <strain>DSM 2380 / NBRC 103641 / GraBd1</strain>
    </source>
</reference>
<name>ARLY_SYNC1</name>
<dbReference type="EC" id="4.3.2.1" evidence="1"/>
<dbReference type="EMBL" id="CP000142">
    <property type="protein sequence ID" value="ABA89657.1"/>
    <property type="molecule type" value="Genomic_DNA"/>
</dbReference>
<dbReference type="RefSeq" id="WP_011342183.1">
    <property type="nucleotide sequence ID" value="NC_007498.2"/>
</dbReference>
<dbReference type="SMR" id="Q3A1V0"/>
<dbReference type="STRING" id="338963.Pcar_2418"/>
<dbReference type="KEGG" id="pca:Pcar_2418"/>
<dbReference type="eggNOG" id="COG0165">
    <property type="taxonomic scope" value="Bacteria"/>
</dbReference>
<dbReference type="HOGENOM" id="CLU_027272_2_3_7"/>
<dbReference type="OrthoDB" id="9769623at2"/>
<dbReference type="UniPathway" id="UPA00068">
    <property type="reaction ID" value="UER00114"/>
</dbReference>
<dbReference type="Proteomes" id="UP000002534">
    <property type="component" value="Chromosome"/>
</dbReference>
<dbReference type="GO" id="GO:0005829">
    <property type="term" value="C:cytosol"/>
    <property type="evidence" value="ECO:0007669"/>
    <property type="project" value="TreeGrafter"/>
</dbReference>
<dbReference type="GO" id="GO:0004056">
    <property type="term" value="F:argininosuccinate lyase activity"/>
    <property type="evidence" value="ECO:0007669"/>
    <property type="project" value="UniProtKB-UniRule"/>
</dbReference>
<dbReference type="GO" id="GO:0042450">
    <property type="term" value="P:arginine biosynthetic process via ornithine"/>
    <property type="evidence" value="ECO:0007669"/>
    <property type="project" value="InterPro"/>
</dbReference>
<dbReference type="GO" id="GO:0006526">
    <property type="term" value="P:L-arginine biosynthetic process"/>
    <property type="evidence" value="ECO:0007669"/>
    <property type="project" value="UniProtKB-UniRule"/>
</dbReference>
<dbReference type="CDD" id="cd01359">
    <property type="entry name" value="Argininosuccinate_lyase"/>
    <property type="match status" value="1"/>
</dbReference>
<dbReference type="FunFam" id="1.10.275.10:FF:000002">
    <property type="entry name" value="Argininosuccinate lyase"/>
    <property type="match status" value="1"/>
</dbReference>
<dbReference type="FunFam" id="1.10.40.30:FF:000001">
    <property type="entry name" value="Argininosuccinate lyase"/>
    <property type="match status" value="1"/>
</dbReference>
<dbReference type="FunFam" id="1.20.200.10:FF:000006">
    <property type="entry name" value="Argininosuccinate lyase"/>
    <property type="match status" value="1"/>
</dbReference>
<dbReference type="Gene3D" id="1.10.40.30">
    <property type="entry name" value="Fumarase/aspartase (C-terminal domain)"/>
    <property type="match status" value="1"/>
</dbReference>
<dbReference type="Gene3D" id="1.20.200.10">
    <property type="entry name" value="Fumarase/aspartase (Central domain)"/>
    <property type="match status" value="1"/>
</dbReference>
<dbReference type="Gene3D" id="1.10.275.10">
    <property type="entry name" value="Fumarase/aspartase (N-terminal domain)"/>
    <property type="match status" value="1"/>
</dbReference>
<dbReference type="HAMAP" id="MF_00006">
    <property type="entry name" value="Arg_succ_lyase"/>
    <property type="match status" value="1"/>
</dbReference>
<dbReference type="InterPro" id="IPR029419">
    <property type="entry name" value="Arg_succ_lyase_C"/>
</dbReference>
<dbReference type="InterPro" id="IPR009049">
    <property type="entry name" value="Argininosuccinate_lyase"/>
</dbReference>
<dbReference type="InterPro" id="IPR024083">
    <property type="entry name" value="Fumarase/histidase_N"/>
</dbReference>
<dbReference type="InterPro" id="IPR020557">
    <property type="entry name" value="Fumarate_lyase_CS"/>
</dbReference>
<dbReference type="InterPro" id="IPR000362">
    <property type="entry name" value="Fumarate_lyase_fam"/>
</dbReference>
<dbReference type="InterPro" id="IPR022761">
    <property type="entry name" value="Fumarate_lyase_N"/>
</dbReference>
<dbReference type="InterPro" id="IPR008948">
    <property type="entry name" value="L-Aspartase-like"/>
</dbReference>
<dbReference type="NCBIfam" id="TIGR00838">
    <property type="entry name" value="argH"/>
    <property type="match status" value="1"/>
</dbReference>
<dbReference type="PANTHER" id="PTHR43814">
    <property type="entry name" value="ARGININOSUCCINATE LYASE"/>
    <property type="match status" value="1"/>
</dbReference>
<dbReference type="PANTHER" id="PTHR43814:SF1">
    <property type="entry name" value="ARGININOSUCCINATE LYASE"/>
    <property type="match status" value="1"/>
</dbReference>
<dbReference type="Pfam" id="PF14698">
    <property type="entry name" value="ASL_C2"/>
    <property type="match status" value="1"/>
</dbReference>
<dbReference type="Pfam" id="PF00206">
    <property type="entry name" value="Lyase_1"/>
    <property type="match status" value="1"/>
</dbReference>
<dbReference type="PRINTS" id="PR00145">
    <property type="entry name" value="ARGSUCLYASE"/>
</dbReference>
<dbReference type="PRINTS" id="PR00149">
    <property type="entry name" value="FUMRATELYASE"/>
</dbReference>
<dbReference type="SUPFAM" id="SSF48557">
    <property type="entry name" value="L-aspartase-like"/>
    <property type="match status" value="1"/>
</dbReference>
<dbReference type="PROSITE" id="PS00163">
    <property type="entry name" value="FUMARATE_LYASES"/>
    <property type="match status" value="1"/>
</dbReference>